<sequence length="427" mass="48930">MATVIHNPLKALGDQFYKEAIEHCRSYNSRLCAERSVRLPFLDSQTGVAQNNCYIWMEKRHRGPGLAPGQLYTYPARCWRKKRRLHPPEDSRLKLLEIKPETSHLPGKTELITETEFITKMSVDLRRFLSCKLYTSEVDLPLKKDGFTSESTTLEALLRGEGIEKKMDTKEEDPIQEIQRVLENDENADEVNEEEDLEEDIPKRKNRPRGRPKTPTWKKIFQKNARGSGGGRRRNDAASQDDHDKPYVCDICGKRYKNRPGLSYHYAHTHLASEEGDEAREQETRSSPVHRNENHKPQKGPDGVIIPNNYCDFCLGGSNMNKKSGRPEELVSCSDCGRSGHPTCLQFTTNMTEAVKTYQWQCIECKSCSLCGTSENDDQLLFCDDCDRGYHMYCLNPPVFEPPEGSWSCHLCRELLRERASAFGFQA</sequence>
<comment type="function">
    <text evidence="7">Muscle-specific component of the BAF complex, a multiprotein complex involved in transcriptional activation and repression of select genes by chromatin remodeling (alteration of DNA-nucleosome topology). Specifically binds acetylated lysines on histone 3 and 4. In the complex, it acts as a tissue-specific anchor between histone acetylations and methylations and chromatin remodeling. It thereby probably plays an essential role in heart and skeletal muscle development. Belongs to the neuron-specific chromatin remodeling complex (nBAF complex) and plays a role in neural development.</text>
</comment>
<comment type="subunit">
    <text evidence="2 3">Component of the BAF complex. Interacts with acetylated histones H3 and H4. Component of neuron-specific chromatin remodeling complex (nBAF complex), a subfamily of ATP-dependent SWI/SNF chromatin remodeling complexes (By similarity).</text>
</comment>
<comment type="subcellular location">
    <subcellularLocation>
        <location evidence="3">Nucleus</location>
    </subcellularLocation>
</comment>
<comment type="alternative products">
    <event type="alternative splicing"/>
    <isoform>
        <id>P58270-1</id>
        <name>1</name>
        <sequence type="displayed"/>
    </isoform>
    <isoform>
        <id>P58270-2</id>
        <name>2</name>
        <sequence type="described" ref="VSP_005614 VSP_005615"/>
    </isoform>
    <isoform>
        <id>P58270-3</id>
        <name>3</name>
        <sequence type="described" ref="VSP_005614 VSP_005616"/>
    </isoform>
    <isoform>
        <id>P58270-4</id>
        <name>4</name>
        <sequence type="described" ref="VSP_005614 VSP_005615 VSP_005616"/>
    </isoform>
</comment>
<comment type="tissue specificity">
    <text evidence="8">Expressed in the heart and somites.</text>
</comment>
<comment type="domain">
    <text evidence="1">The PHD-type zinc fingers mediate the binding to acetylated histones.</text>
</comment>
<comment type="similarity">
    <text evidence="10">Belongs to the requiem/DPF family.</text>
</comment>
<dbReference type="EMBL" id="AF362754">
    <property type="protein sequence ID" value="AAK51968.1"/>
    <property type="molecule type" value="mRNA"/>
</dbReference>
<dbReference type="EMBL" id="AF362753">
    <property type="protein sequence ID" value="AAK51967.1"/>
    <property type="molecule type" value="mRNA"/>
</dbReference>
<dbReference type="EMBL" id="AF362756">
    <property type="protein sequence ID" value="AAK51970.1"/>
    <property type="molecule type" value="mRNA"/>
</dbReference>
<dbReference type="EMBL" id="AF362755">
    <property type="protein sequence ID" value="AAK51969.1"/>
    <property type="molecule type" value="mRNA"/>
</dbReference>
<dbReference type="RefSeq" id="NP_989970.1">
    <property type="nucleotide sequence ID" value="NM_204639.2"/>
</dbReference>
<dbReference type="RefSeq" id="XP_015142411.1">
    <molecule id="P58270-2"/>
    <property type="nucleotide sequence ID" value="XM_015286925.4"/>
</dbReference>
<dbReference type="RefSeq" id="XP_040556502.1">
    <molecule id="P58270-3"/>
    <property type="nucleotide sequence ID" value="XM_040700568.2"/>
</dbReference>
<dbReference type="RefSeq" id="XP_040556503.1">
    <molecule id="P58270-4"/>
    <property type="nucleotide sequence ID" value="XM_040700569.2"/>
</dbReference>
<dbReference type="RefSeq" id="XP_046773640.1">
    <molecule id="P58270-2"/>
    <property type="nucleotide sequence ID" value="XM_046917684.1"/>
</dbReference>
<dbReference type="RefSeq" id="XP_046773642.1">
    <molecule id="P58270-3"/>
    <property type="nucleotide sequence ID" value="XM_046917686.1"/>
</dbReference>
<dbReference type="RefSeq" id="XP_046773643.1">
    <molecule id="P58270-4"/>
    <property type="nucleotide sequence ID" value="XM_046917687.1"/>
</dbReference>
<dbReference type="SMR" id="P58270"/>
<dbReference type="FunCoup" id="P58270">
    <property type="interactions" value="1297"/>
</dbReference>
<dbReference type="STRING" id="9031.ENSGALP00000063935"/>
<dbReference type="PaxDb" id="9031-ENSGALP00000015213"/>
<dbReference type="Ensembl" id="ENSGALT00010051452.1">
    <molecule id="P58270-3"/>
    <property type="protein sequence ID" value="ENSGALP00010030643.1"/>
    <property type="gene ID" value="ENSGALG00010021218.1"/>
</dbReference>
<dbReference type="GeneID" id="395351"/>
<dbReference type="KEGG" id="gga:395351"/>
<dbReference type="CTD" id="8110"/>
<dbReference type="VEuPathDB" id="HostDB:geneid_395351"/>
<dbReference type="eggNOG" id="KOG1244">
    <property type="taxonomic scope" value="Eukaryota"/>
</dbReference>
<dbReference type="GeneTree" id="ENSGT00940000159153"/>
<dbReference type="InParanoid" id="P58270"/>
<dbReference type="OrthoDB" id="1903104at2759"/>
<dbReference type="PhylomeDB" id="P58270"/>
<dbReference type="PRO" id="PR:P58270"/>
<dbReference type="Proteomes" id="UP000000539">
    <property type="component" value="Chromosome 5"/>
</dbReference>
<dbReference type="GO" id="GO:0071565">
    <property type="term" value="C:nBAF complex"/>
    <property type="evidence" value="ECO:0000318"/>
    <property type="project" value="GO_Central"/>
</dbReference>
<dbReference type="GO" id="GO:0008270">
    <property type="term" value="F:zinc ion binding"/>
    <property type="evidence" value="ECO:0007669"/>
    <property type="project" value="UniProtKB-KW"/>
</dbReference>
<dbReference type="GO" id="GO:0006325">
    <property type="term" value="P:chromatin organization"/>
    <property type="evidence" value="ECO:0007669"/>
    <property type="project" value="UniProtKB-KW"/>
</dbReference>
<dbReference type="GO" id="GO:0007399">
    <property type="term" value="P:nervous system development"/>
    <property type="evidence" value="ECO:0000318"/>
    <property type="project" value="GO_Central"/>
</dbReference>
<dbReference type="CDD" id="cd15692">
    <property type="entry name" value="PHD1_DPF3"/>
    <property type="match status" value="1"/>
</dbReference>
<dbReference type="CDD" id="cd15530">
    <property type="entry name" value="PHD2_d4"/>
    <property type="match status" value="1"/>
</dbReference>
<dbReference type="FunFam" id="3.30.40.10:FF:000005">
    <property type="entry name" value="zinc finger protein isoform X1"/>
    <property type="match status" value="1"/>
</dbReference>
<dbReference type="Gene3D" id="3.30.160.60">
    <property type="entry name" value="Classic Zinc Finger"/>
    <property type="match status" value="1"/>
</dbReference>
<dbReference type="Gene3D" id="3.30.40.10">
    <property type="entry name" value="Zinc/RING finger domain, C3HC4 (zinc finger)"/>
    <property type="match status" value="1"/>
</dbReference>
<dbReference type="InterPro" id="IPR025750">
    <property type="entry name" value="DPF1-3_N"/>
</dbReference>
<dbReference type="InterPro" id="IPR036236">
    <property type="entry name" value="Znf_C2H2_sf"/>
</dbReference>
<dbReference type="InterPro" id="IPR013087">
    <property type="entry name" value="Znf_C2H2_type"/>
</dbReference>
<dbReference type="InterPro" id="IPR011011">
    <property type="entry name" value="Znf_FYVE_PHD"/>
</dbReference>
<dbReference type="InterPro" id="IPR001965">
    <property type="entry name" value="Znf_PHD"/>
</dbReference>
<dbReference type="InterPro" id="IPR019787">
    <property type="entry name" value="Znf_PHD-finger"/>
</dbReference>
<dbReference type="InterPro" id="IPR013083">
    <property type="entry name" value="Znf_RING/FYVE/PHD"/>
</dbReference>
<dbReference type="PANTHER" id="PTHR45888">
    <property type="entry name" value="HL01030P-RELATED"/>
    <property type="match status" value="1"/>
</dbReference>
<dbReference type="PANTHER" id="PTHR45888:SF10">
    <property type="entry name" value="ZINC FINGER PROTEIN DPF3"/>
    <property type="match status" value="1"/>
</dbReference>
<dbReference type="Pfam" id="PF14051">
    <property type="entry name" value="DPF1-3_N"/>
    <property type="match status" value="1"/>
</dbReference>
<dbReference type="Pfam" id="PF00628">
    <property type="entry name" value="PHD"/>
    <property type="match status" value="2"/>
</dbReference>
<dbReference type="SMART" id="SM00249">
    <property type="entry name" value="PHD"/>
    <property type="match status" value="2"/>
</dbReference>
<dbReference type="SMART" id="SM00355">
    <property type="entry name" value="ZnF_C2H2"/>
    <property type="match status" value="1"/>
</dbReference>
<dbReference type="SUPFAM" id="SSF57667">
    <property type="entry name" value="beta-beta-alpha zinc fingers"/>
    <property type="match status" value="1"/>
</dbReference>
<dbReference type="SUPFAM" id="SSF57903">
    <property type="entry name" value="FYVE/PHD zinc finger"/>
    <property type="match status" value="2"/>
</dbReference>
<dbReference type="PROSITE" id="PS01359">
    <property type="entry name" value="ZF_PHD_1"/>
    <property type="match status" value="1"/>
</dbReference>
<dbReference type="PROSITE" id="PS50016">
    <property type="entry name" value="ZF_PHD_2"/>
    <property type="match status" value="2"/>
</dbReference>
<dbReference type="PROSITE" id="PS00028">
    <property type="entry name" value="ZINC_FINGER_C2H2_1"/>
    <property type="match status" value="1"/>
</dbReference>
<dbReference type="PROSITE" id="PS50157">
    <property type="entry name" value="ZINC_FINGER_C2H2_2"/>
    <property type="match status" value="1"/>
</dbReference>
<protein>
    <recommendedName>
        <fullName>Zinc finger protein DPF3</fullName>
    </recommendedName>
    <alternativeName>
        <fullName>Zinc finger protein cer-d4</fullName>
    </alternativeName>
</protein>
<accession>P58270</accession>
<organism>
    <name type="scientific">Gallus gallus</name>
    <name type="common">Chicken</name>
    <dbReference type="NCBI Taxonomy" id="9031"/>
    <lineage>
        <taxon>Eukaryota</taxon>
        <taxon>Metazoa</taxon>
        <taxon>Chordata</taxon>
        <taxon>Craniata</taxon>
        <taxon>Vertebrata</taxon>
        <taxon>Euteleostomi</taxon>
        <taxon>Archelosauria</taxon>
        <taxon>Archosauria</taxon>
        <taxon>Dinosauria</taxon>
        <taxon>Saurischia</taxon>
        <taxon>Theropoda</taxon>
        <taxon>Coelurosauria</taxon>
        <taxon>Aves</taxon>
        <taxon>Neognathae</taxon>
        <taxon>Galloanserae</taxon>
        <taxon>Galliformes</taxon>
        <taxon>Phasianidae</taxon>
        <taxon>Phasianinae</taxon>
        <taxon>Gallus</taxon>
    </lineage>
</organism>
<gene>
    <name type="primary">DPF3</name>
    <name type="synonym">CERD4</name>
</gene>
<proteinExistence type="evidence at transcript level"/>
<reference key="1">
    <citation type="journal article" date="2001" name="Mamm. Genome">
        <title>Cerd4, third member of the d4 gene family: expression and organization of genomic locus.</title>
        <authorList>
            <person name="Ninkina N.N."/>
            <person name="Mertsalov I.B."/>
            <person name="Kulikova D.A."/>
            <person name="Alimova-Kost M.V."/>
            <person name="Simonova O.B."/>
            <person name="Korochkin L.I."/>
            <person name="Kiselev S.L."/>
            <person name="Buchman V.L."/>
        </authorList>
    </citation>
    <scope>NUCLEOTIDE SEQUENCE [MRNA] (ISOFORMS 1; 2; 3 AND 4)</scope>
</reference>
<reference key="2">
    <citation type="journal article" date="2007" name="Neuron">
        <title>An essential switch in subunit composition of a chromatin remodeling complex during neural development.</title>
        <authorList>
            <person name="Lessard J."/>
            <person name="Wu J.I."/>
            <person name="Ranish J.A."/>
            <person name="Wan M."/>
            <person name="Winslow M.M."/>
            <person name="Staahl B.T."/>
            <person name="Wu H."/>
            <person name="Aebersold R."/>
            <person name="Graef I.A."/>
            <person name="Crabtree G.R."/>
        </authorList>
    </citation>
    <scope>FUNCTION</scope>
</reference>
<reference key="3">
    <citation type="journal article" date="2008" name="Genes Dev.">
        <title>Regulation of muscle development by DPF3, a novel histone acetylation and methylation reader of the BAF chromatin remodeling complex.</title>
        <authorList>
            <person name="Lange M."/>
            <person name="Kaynak B."/>
            <person name="Forster U.B."/>
            <person name="Toenjes M."/>
            <person name="Fischer J.J."/>
            <person name="Grimm C."/>
            <person name="Schlesinger J."/>
            <person name="Just S."/>
            <person name="Dunkel I."/>
            <person name="Krueger T."/>
            <person name="Mebus S."/>
            <person name="Lehrach H."/>
            <person name="Lurz R."/>
            <person name="Gobom J."/>
            <person name="Rottbauer W."/>
            <person name="Abdelilah-Seyfried S."/>
            <person name="Sperling S."/>
        </authorList>
    </citation>
    <scope>TISSUE SPECIFICITY</scope>
</reference>
<name>DPF3_CHICK</name>
<evidence type="ECO:0000250" key="1"/>
<evidence type="ECO:0000250" key="2">
    <source>
        <dbReference type="UniProtKB" id="P58269"/>
    </source>
</evidence>
<evidence type="ECO:0000250" key="3">
    <source>
        <dbReference type="UniProtKB" id="Q92784"/>
    </source>
</evidence>
<evidence type="ECO:0000255" key="4">
    <source>
        <dbReference type="PROSITE-ProRule" id="PRU00042"/>
    </source>
</evidence>
<evidence type="ECO:0000255" key="5">
    <source>
        <dbReference type="PROSITE-ProRule" id="PRU00146"/>
    </source>
</evidence>
<evidence type="ECO:0000256" key="6">
    <source>
        <dbReference type="SAM" id="MobiDB-lite"/>
    </source>
</evidence>
<evidence type="ECO:0000269" key="7">
    <source>
    </source>
</evidence>
<evidence type="ECO:0000269" key="8">
    <source>
    </source>
</evidence>
<evidence type="ECO:0000303" key="9">
    <source>
    </source>
</evidence>
<evidence type="ECO:0000305" key="10"/>
<feature type="chain" id="PRO_0000168156" description="Zinc finger protein DPF3">
    <location>
        <begin position="1"/>
        <end position="427"/>
    </location>
</feature>
<feature type="zinc finger region" description="C2H2-type" evidence="4">
    <location>
        <begin position="247"/>
        <end position="270"/>
    </location>
</feature>
<feature type="zinc finger region" description="PHD-type 1" evidence="5">
    <location>
        <begin position="308"/>
        <end position="368"/>
    </location>
</feature>
<feature type="zinc finger region" description="PHD-type 2" evidence="5">
    <location>
        <begin position="365"/>
        <end position="415"/>
    </location>
</feature>
<feature type="region of interest" description="Disordered" evidence="6">
    <location>
        <begin position="182"/>
        <end position="244"/>
    </location>
</feature>
<feature type="region of interest" description="Disordered" evidence="6">
    <location>
        <begin position="272"/>
        <end position="301"/>
    </location>
</feature>
<feature type="compositionally biased region" description="Acidic residues" evidence="6">
    <location>
        <begin position="184"/>
        <end position="199"/>
    </location>
</feature>
<feature type="compositionally biased region" description="Basic and acidic residues" evidence="6">
    <location>
        <begin position="233"/>
        <end position="244"/>
    </location>
</feature>
<feature type="compositionally biased region" description="Basic and acidic residues" evidence="6">
    <location>
        <begin position="279"/>
        <end position="296"/>
    </location>
</feature>
<feature type="splice variant" id="VSP_005614" description="In isoform 2, isoform 3 and isoform 4." evidence="9">
    <location>
        <begin position="102"/>
        <end position="137"/>
    </location>
</feature>
<feature type="splice variant" id="VSP_005615" description="In isoform 2 and isoform 4." evidence="9">
    <location>
        <begin position="212"/>
        <end position="224"/>
    </location>
</feature>
<feature type="splice variant" id="VSP_005616" description="In isoform 3 and isoform 4." evidence="9">
    <original>GHPTCLQFTTNMTEAVKTYQWQCIECKSCSLCGTSENDDQLLFCDDCDRGYHMYCLNPPVFEPPEGSWSCHLCRELLRERASAFGFQA</original>
    <variation>AHLGREGRRDEAAPTRTTEDLFGSTSESDTSTFHGFDEDDAEEPLSSRGGGCGGSSPSADKKGGC</variation>
    <location>
        <begin position="340"/>
        <end position="427"/>
    </location>
</feature>
<keyword id="KW-0010">Activator</keyword>
<keyword id="KW-0025">Alternative splicing</keyword>
<keyword id="KW-0156">Chromatin regulator</keyword>
<keyword id="KW-0479">Metal-binding</keyword>
<keyword id="KW-0524">Neurogenesis</keyword>
<keyword id="KW-0539">Nucleus</keyword>
<keyword id="KW-1185">Reference proteome</keyword>
<keyword id="KW-0677">Repeat</keyword>
<keyword id="KW-0678">Repressor</keyword>
<keyword id="KW-0804">Transcription</keyword>
<keyword id="KW-0805">Transcription regulation</keyword>
<keyword id="KW-0862">Zinc</keyword>
<keyword id="KW-0863">Zinc-finger</keyword>